<protein>
    <recommendedName>
        <fullName evidence="3">Arginine N-acetyltransferase avaD</fullName>
        <ecNumber evidence="2">2.3.1.-</ecNumber>
    </recommendedName>
    <alternativeName>
        <fullName evidence="3">Ava biosynthesis cluster protein D</fullName>
    </alternativeName>
    <alternativeName>
        <fullName>Gcn5-related N-acetyltransferases avaD</fullName>
        <shortName evidence="3">GNAT avaD</shortName>
    </alternativeName>
</protein>
<proteinExistence type="evidence at protein level"/>
<reference key="1">
    <citation type="journal article" date="2023" name="Nat. Chem. Biol.">
        <title>Genome mining for unknown-unknown natural products.</title>
        <authorList>
            <person name="Yee D.A."/>
            <person name="Niwa K."/>
            <person name="Perlatti B."/>
            <person name="Chen M."/>
            <person name="Li Y."/>
            <person name="Tang Y."/>
        </authorList>
    </citation>
    <scope>NUCLEOTIDE SEQUENCE [GENOMIC DNA]</scope>
    <scope>FUNCTION</scope>
    <scope>CATALYTIC ACTIVITY</scope>
    <scope>PATHWAY</scope>
    <source>
        <strain>dI-29</strain>
    </source>
</reference>
<feature type="chain" id="PRO_0000461017" description="Arginine N-acetyltransferase avaD">
    <location>
        <begin position="1"/>
        <end position="290"/>
    </location>
</feature>
<feature type="binding site" evidence="1">
    <location>
        <begin position="157"/>
        <end position="163"/>
    </location>
    <ligand>
        <name>acetyl-CoA</name>
        <dbReference type="ChEBI" id="CHEBI:57288"/>
    </ligand>
</feature>
<sequence>MAGIDLQSLGISLPPGYSLQTAAARPDMYETLFDPEHPMSSLWPQFITSTPVSEKYWSQLTDIPLFASYQLMILHRDVENKHESVVACGNSVPVYCPLNDLPDGGWEAILQTGIENYRAGHKQHPNLLSALGVTVASAHRQQGLADIVIQTLRALANQAHFEALVVPLRPTKKSEHPMVPLEEYVHWKLDEHARPDDQVSYDPWLRKHLSYGGQMVRIAPRSMTIAAHADQWKDWTGCDLAALAESGSDTSSKGLVEMPIPRALVPVQYDPVSKVASYVEPNVWVVHPIH</sequence>
<organism>
    <name type="scientific">Aspergillus versicolor</name>
    <dbReference type="NCBI Taxonomy" id="46472"/>
    <lineage>
        <taxon>Eukaryota</taxon>
        <taxon>Fungi</taxon>
        <taxon>Dikarya</taxon>
        <taxon>Ascomycota</taxon>
        <taxon>Pezizomycotina</taxon>
        <taxon>Eurotiomycetes</taxon>
        <taxon>Eurotiomycetidae</taxon>
        <taxon>Eurotiales</taxon>
        <taxon>Aspergillaceae</taxon>
        <taxon>Aspergillus</taxon>
        <taxon>Aspergillus subgen. Nidulantes</taxon>
    </lineage>
</organism>
<comment type="function">
    <text evidence="2">Arginine N-acetyltransferase; part of the cluster that mediates the biosynthesis of a highly modified cyclo-arginine-tryptophan dipeptide (cRW) (PubMed:36702957). Within the pathway, avaD catalyzes the N-acetylation of the guanidine group (PubMed:36702957). The first step of the pathway is perfornmed by the arginine-containing cyclodipeptide synthase (RCPDS) avaA that acts as the scaffold-generating enzyme and is responsible for formation of the cyclo-Arg-Trp (cRW) diketopiperazine. AvaB then acts as a multifunctional flavoenzyme that is responsible for generating the cyclo-Arg-formylkynurenine DKP, which can be deformylated by avaC. AvaB then further catalyzes an additional N-oxidation followed by cyclization and dehydration. The next step is an N-acetylation of the guanidine group catalyzed by the arginine N-acetyltransferase avaD. The roles of the additional enzymes identified within the ava cluster still have to be determined (PubMed:36702957).</text>
</comment>
<comment type="pathway">
    <text evidence="2">Secondary metabolite metabolism.</text>
</comment>
<comment type="similarity">
    <text evidence="4">Belongs to the acetyltransferase family. GCN5 subfamily.</text>
</comment>
<keyword id="KW-0012">Acyltransferase</keyword>
<keyword id="KW-0808">Transferase</keyword>
<dbReference type="EC" id="2.3.1.-" evidence="2"/>
<dbReference type="EMBL" id="OP596311">
    <property type="protein sequence ID" value="UZP48216.1"/>
    <property type="molecule type" value="Genomic_DNA"/>
</dbReference>
<dbReference type="GO" id="GO:0016746">
    <property type="term" value="F:acyltransferase activity"/>
    <property type="evidence" value="ECO:0007669"/>
    <property type="project" value="UniProtKB-KW"/>
</dbReference>
<dbReference type="Gene3D" id="3.40.630.30">
    <property type="match status" value="1"/>
</dbReference>
<name>AVAD_ASPVE</name>
<gene>
    <name evidence="3" type="primary">avaD</name>
</gene>
<accession>P9WEK5</accession>
<evidence type="ECO:0000250" key="1">
    <source>
        <dbReference type="UniProtKB" id="Q92830"/>
    </source>
</evidence>
<evidence type="ECO:0000269" key="2">
    <source>
    </source>
</evidence>
<evidence type="ECO:0000303" key="3">
    <source>
    </source>
</evidence>
<evidence type="ECO:0000305" key="4"/>